<dbReference type="EMBL" id="L11273">
    <property type="protein sequence ID" value="AAA24200.1"/>
    <property type="molecule type" value="Genomic_DNA"/>
</dbReference>
<dbReference type="EMBL" id="U00008">
    <property type="protein sequence ID" value="AAA16411.1"/>
    <property type="status" value="ALT_INIT"/>
    <property type="molecule type" value="Genomic_DNA"/>
</dbReference>
<dbReference type="EMBL" id="U00096">
    <property type="protein sequence ID" value="AAC75253.1"/>
    <property type="molecule type" value="Genomic_DNA"/>
</dbReference>
<dbReference type="EMBL" id="AP009048">
    <property type="protein sequence ID" value="BAE76656.1"/>
    <property type="molecule type" value="Genomic_DNA"/>
</dbReference>
<dbReference type="PIR" id="A40584">
    <property type="entry name" value="A40584"/>
</dbReference>
<dbReference type="RefSeq" id="NP_416697.1">
    <property type="nucleotide sequence ID" value="NC_000913.3"/>
</dbReference>
<dbReference type="RefSeq" id="WP_001113639.1">
    <property type="nucleotide sequence ID" value="NZ_LN832404.1"/>
</dbReference>
<dbReference type="SMR" id="P31802"/>
<dbReference type="BioGRID" id="4263485">
    <property type="interactions" value="125"/>
</dbReference>
<dbReference type="BioGRID" id="853322">
    <property type="interactions" value="4"/>
</dbReference>
<dbReference type="DIP" id="DIP-10317N"/>
<dbReference type="FunCoup" id="P31802">
    <property type="interactions" value="314"/>
</dbReference>
<dbReference type="IntAct" id="P31802">
    <property type="interactions" value="5"/>
</dbReference>
<dbReference type="STRING" id="511145.b2193"/>
<dbReference type="iPTMnet" id="P31802"/>
<dbReference type="jPOST" id="P31802"/>
<dbReference type="PaxDb" id="511145-b2193"/>
<dbReference type="EnsemblBacteria" id="AAC75253">
    <property type="protein sequence ID" value="AAC75253"/>
    <property type="gene ID" value="b2193"/>
</dbReference>
<dbReference type="GeneID" id="949081"/>
<dbReference type="KEGG" id="ecj:JW2181"/>
<dbReference type="KEGG" id="eco:b2193"/>
<dbReference type="KEGG" id="ecoc:C3026_12260"/>
<dbReference type="PATRIC" id="fig|1411691.4.peg.43"/>
<dbReference type="EchoBASE" id="EB1489"/>
<dbReference type="eggNOG" id="COG2197">
    <property type="taxonomic scope" value="Bacteria"/>
</dbReference>
<dbReference type="HOGENOM" id="CLU_000445_90_10_6"/>
<dbReference type="InParanoid" id="P31802"/>
<dbReference type="OMA" id="LDKYATH"/>
<dbReference type="OrthoDB" id="9796655at2"/>
<dbReference type="PhylomeDB" id="P31802"/>
<dbReference type="BioCyc" id="EcoCyc:NARP-MONOMER"/>
<dbReference type="PRO" id="PR:P31802"/>
<dbReference type="Proteomes" id="UP000000625">
    <property type="component" value="Chromosome"/>
</dbReference>
<dbReference type="GO" id="GO:0005524">
    <property type="term" value="F:ATP binding"/>
    <property type="evidence" value="ECO:0007669"/>
    <property type="project" value="UniProtKB-KW"/>
</dbReference>
<dbReference type="GO" id="GO:0003677">
    <property type="term" value="F:DNA binding"/>
    <property type="evidence" value="ECO:0000315"/>
    <property type="project" value="EcoCyc"/>
</dbReference>
<dbReference type="GO" id="GO:0042128">
    <property type="term" value="P:nitrate assimilation"/>
    <property type="evidence" value="ECO:0007669"/>
    <property type="project" value="UniProtKB-KW"/>
</dbReference>
<dbReference type="GO" id="GO:0000160">
    <property type="term" value="P:phosphorelay signal transduction system"/>
    <property type="evidence" value="ECO:0007669"/>
    <property type="project" value="UniProtKB-KW"/>
</dbReference>
<dbReference type="GO" id="GO:0006355">
    <property type="term" value="P:regulation of DNA-templated transcription"/>
    <property type="evidence" value="ECO:0000315"/>
    <property type="project" value="EcoCyc"/>
</dbReference>
<dbReference type="CDD" id="cd06170">
    <property type="entry name" value="LuxR_C_like"/>
    <property type="match status" value="1"/>
</dbReference>
<dbReference type="FunFam" id="3.40.50.2300:FF:000102">
    <property type="entry name" value="Nitrate/nitrite response regulator protein narP"/>
    <property type="match status" value="1"/>
</dbReference>
<dbReference type="Gene3D" id="3.40.50.2300">
    <property type="match status" value="1"/>
</dbReference>
<dbReference type="InterPro" id="IPR011006">
    <property type="entry name" value="CheY-like_superfamily"/>
</dbReference>
<dbReference type="InterPro" id="IPR016032">
    <property type="entry name" value="Sig_transdc_resp-reg_C-effctor"/>
</dbReference>
<dbReference type="InterPro" id="IPR001789">
    <property type="entry name" value="Sig_transdc_resp-reg_receiver"/>
</dbReference>
<dbReference type="InterPro" id="IPR000792">
    <property type="entry name" value="Tscrpt_reg_LuxR_C"/>
</dbReference>
<dbReference type="InterPro" id="IPR039420">
    <property type="entry name" value="WalR-like"/>
</dbReference>
<dbReference type="NCBIfam" id="NF007708">
    <property type="entry name" value="PRK10403.1"/>
    <property type="match status" value="1"/>
</dbReference>
<dbReference type="PANTHER" id="PTHR43214:SF41">
    <property type="entry name" value="NITRATE_NITRITE RESPONSE REGULATOR PROTEIN NARP"/>
    <property type="match status" value="1"/>
</dbReference>
<dbReference type="PANTHER" id="PTHR43214">
    <property type="entry name" value="TWO-COMPONENT RESPONSE REGULATOR"/>
    <property type="match status" value="1"/>
</dbReference>
<dbReference type="Pfam" id="PF00196">
    <property type="entry name" value="GerE"/>
    <property type="match status" value="1"/>
</dbReference>
<dbReference type="Pfam" id="PF00072">
    <property type="entry name" value="Response_reg"/>
    <property type="match status" value="1"/>
</dbReference>
<dbReference type="PRINTS" id="PR00038">
    <property type="entry name" value="HTHLUXR"/>
</dbReference>
<dbReference type="SMART" id="SM00421">
    <property type="entry name" value="HTH_LUXR"/>
    <property type="match status" value="1"/>
</dbReference>
<dbReference type="SMART" id="SM00448">
    <property type="entry name" value="REC"/>
    <property type="match status" value="1"/>
</dbReference>
<dbReference type="SUPFAM" id="SSF46894">
    <property type="entry name" value="C-terminal effector domain of the bipartite response regulators"/>
    <property type="match status" value="1"/>
</dbReference>
<dbReference type="SUPFAM" id="SSF52172">
    <property type="entry name" value="CheY-like"/>
    <property type="match status" value="1"/>
</dbReference>
<dbReference type="PROSITE" id="PS00622">
    <property type="entry name" value="HTH_LUXR_1"/>
    <property type="match status" value="1"/>
</dbReference>
<dbReference type="PROSITE" id="PS50043">
    <property type="entry name" value="HTH_LUXR_2"/>
    <property type="match status" value="1"/>
</dbReference>
<dbReference type="PROSITE" id="PS50110">
    <property type="entry name" value="RESPONSE_REGULATORY"/>
    <property type="match status" value="1"/>
</dbReference>
<evidence type="ECO:0000255" key="1">
    <source>
        <dbReference type="PROSITE-ProRule" id="PRU00169"/>
    </source>
</evidence>
<evidence type="ECO:0000255" key="2">
    <source>
        <dbReference type="PROSITE-ProRule" id="PRU00411"/>
    </source>
</evidence>
<evidence type="ECO:0000305" key="3"/>
<comment type="function">
    <text>This protein activates the expression of the nitrate reductase (narGHJI) and formate dehydrogenase-N (fdnGHI) operons and represses the transcription of the fumarate reductase (frdABCD) operon in response to a nitrate/nitrite induction signal transmitted by either the NarX or NarQ proteins.</text>
</comment>
<comment type="sequence caution" evidence="3">
    <conflict type="erroneous initiation">
        <sequence resource="EMBL-CDS" id="AAA16411"/>
    </conflict>
</comment>
<name>NARP_ECOLI</name>
<accession>P31802</accession>
<accession>Q2MAQ0</accession>
<proteinExistence type="inferred from homology"/>
<feature type="chain" id="PRO_0000081149" description="Nitrate/nitrite response regulator protein NarP">
    <location>
        <begin position="1"/>
        <end position="215"/>
    </location>
</feature>
<feature type="domain" description="Response regulatory" evidence="1">
    <location>
        <begin position="8"/>
        <end position="124"/>
    </location>
</feature>
<feature type="domain" description="HTH luxR-type" evidence="2">
    <location>
        <begin position="147"/>
        <end position="212"/>
    </location>
</feature>
<feature type="DNA-binding region" description="H-T-H motif" evidence="2">
    <location>
        <begin position="171"/>
        <end position="190"/>
    </location>
</feature>
<feature type="modified residue" description="4-aspartylphosphate" evidence="1">
    <location>
        <position position="59"/>
    </location>
</feature>
<reference key="1">
    <citation type="journal article" date="1993" name="J. Bacteriol.">
        <title>Dual response regulators (NarL and NarP) interact with dual sensors (NarX and NarQ) to control nitrate- and nitrite-regulated gene expression in Escherichia coli K-12.</title>
        <authorList>
            <person name="Rabin R.S."/>
            <person name="Stewart V."/>
        </authorList>
    </citation>
    <scope>NUCLEOTIDE SEQUENCE [GENOMIC DNA]</scope>
    <source>
        <strain>K12</strain>
    </source>
</reference>
<reference key="2">
    <citation type="submission" date="1993-10" db="EMBL/GenBank/DDBJ databases">
        <title>Automated multiplex sequencing of the E.coli genome.</title>
        <authorList>
            <person name="Richterich P."/>
            <person name="Lakey N."/>
            <person name="Gryan G."/>
            <person name="Jaehn L."/>
            <person name="Mintz L."/>
            <person name="Robison K."/>
            <person name="Church G.M."/>
        </authorList>
    </citation>
    <scope>NUCLEOTIDE SEQUENCE [LARGE SCALE GENOMIC DNA]</scope>
    <source>
        <strain>K12 / BHB2600</strain>
    </source>
</reference>
<reference key="3">
    <citation type="journal article" date="1997" name="Science">
        <title>The complete genome sequence of Escherichia coli K-12.</title>
        <authorList>
            <person name="Blattner F.R."/>
            <person name="Plunkett G. III"/>
            <person name="Bloch C.A."/>
            <person name="Perna N.T."/>
            <person name="Burland V."/>
            <person name="Riley M."/>
            <person name="Collado-Vides J."/>
            <person name="Glasner J.D."/>
            <person name="Rode C.K."/>
            <person name="Mayhew G.F."/>
            <person name="Gregor J."/>
            <person name="Davis N.W."/>
            <person name="Kirkpatrick H.A."/>
            <person name="Goeden M.A."/>
            <person name="Rose D.J."/>
            <person name="Mau B."/>
            <person name="Shao Y."/>
        </authorList>
    </citation>
    <scope>NUCLEOTIDE SEQUENCE [LARGE SCALE GENOMIC DNA]</scope>
    <source>
        <strain>K12 / MG1655 / ATCC 47076</strain>
    </source>
</reference>
<reference key="4">
    <citation type="journal article" date="2006" name="Mol. Syst. Biol.">
        <title>Highly accurate genome sequences of Escherichia coli K-12 strains MG1655 and W3110.</title>
        <authorList>
            <person name="Hayashi K."/>
            <person name="Morooka N."/>
            <person name="Yamamoto Y."/>
            <person name="Fujita K."/>
            <person name="Isono K."/>
            <person name="Choi S."/>
            <person name="Ohtsubo E."/>
            <person name="Baba T."/>
            <person name="Wanner B.L."/>
            <person name="Mori H."/>
            <person name="Horiuchi T."/>
        </authorList>
    </citation>
    <scope>NUCLEOTIDE SEQUENCE [LARGE SCALE GENOMIC DNA]</scope>
    <source>
        <strain>K12 / W3110 / ATCC 27325 / DSM 5911</strain>
    </source>
</reference>
<protein>
    <recommendedName>
        <fullName>Nitrate/nitrite response regulator protein NarP</fullName>
    </recommendedName>
</protein>
<sequence>MPEATPFQVMIVDDHPLMRRGVRQLLELDPGSEVVAEAGDGASAIDLANRLDIDVILLDLNMKGMSGLDTLNALRRDGVTAQIIILTVSDASSDVFALIDAGADGYLLKDSDPEVLLEAIRAGAKGSKVFSERVNQYLREREMFGAEEDPFSVLTERELDVLHELAQGLSNKQIASVLNISEQTVKVHIRNLLRKLNVRSRVAATILFLQQRGAQ</sequence>
<organism>
    <name type="scientific">Escherichia coli (strain K12)</name>
    <dbReference type="NCBI Taxonomy" id="83333"/>
    <lineage>
        <taxon>Bacteria</taxon>
        <taxon>Pseudomonadati</taxon>
        <taxon>Pseudomonadota</taxon>
        <taxon>Gammaproteobacteria</taxon>
        <taxon>Enterobacterales</taxon>
        <taxon>Enterobacteriaceae</taxon>
        <taxon>Escherichia</taxon>
    </lineage>
</organism>
<gene>
    <name type="primary">narP</name>
    <name type="ordered locus">b2193</name>
    <name type="ordered locus">JW2181</name>
</gene>
<keyword id="KW-0010">Activator</keyword>
<keyword id="KW-0067">ATP-binding</keyword>
<keyword id="KW-0238">DNA-binding</keyword>
<keyword id="KW-0534">Nitrate assimilation</keyword>
<keyword id="KW-0547">Nucleotide-binding</keyword>
<keyword id="KW-0597">Phosphoprotein</keyword>
<keyword id="KW-1185">Reference proteome</keyword>
<keyword id="KW-0678">Repressor</keyword>
<keyword id="KW-0804">Transcription</keyword>
<keyword id="KW-0805">Transcription regulation</keyword>
<keyword id="KW-0902">Two-component regulatory system</keyword>